<keyword id="KW-0227">DNA damage</keyword>
<keyword id="KW-0234">DNA repair</keyword>
<keyword id="KW-0238">DNA-binding</keyword>
<keyword id="KW-0326">Glycosidase</keyword>
<keyword id="KW-0378">Hydrolase</keyword>
<keyword id="KW-0456">Lyase</keyword>
<keyword id="KW-0479">Metal-binding</keyword>
<keyword id="KW-0511">Multifunctional enzyme</keyword>
<keyword id="KW-0862">Zinc</keyword>
<keyword id="KW-0863">Zinc-finger</keyword>
<sequence>MPEMPEVETVRRTLIPLIKGKTIEKVILWYPKIVATDHEKFLSELPGKKIIDIDRYAKYLLIRLSDNLTIVSHLRMEGKYHLTTSDAPKDKHDHVEFIFTDGTALRYNDVRKFGRMQLILTGTERQTTGIGKLGYEPNSSEFTSEYLVNGLKRKKKNIKNTLLDQSVVAGLGNIYVDEVLWRTKIHPLSQANKIPAEKVMELHDQINQIITEAIKLQGTTVHSFLNANGQVGGFQSKLQVYGHVGEPCPVCGTKFEKIKVNGRGTTFCPHCQVIYK</sequence>
<proteinExistence type="inferred from homology"/>
<accession>A8YWE6</accession>
<evidence type="ECO:0000250" key="1"/>
<evidence type="ECO:0000255" key="2">
    <source>
        <dbReference type="HAMAP-Rule" id="MF_00103"/>
    </source>
</evidence>
<dbReference type="EC" id="3.2.2.23" evidence="2"/>
<dbReference type="EC" id="4.2.99.18" evidence="2"/>
<dbReference type="EMBL" id="CP000517">
    <property type="protein sequence ID" value="ABX27532.1"/>
    <property type="molecule type" value="Genomic_DNA"/>
</dbReference>
<dbReference type="RefSeq" id="WP_003627142.1">
    <property type="nucleotide sequence ID" value="NC_010080.1"/>
</dbReference>
<dbReference type="SMR" id="A8YWE6"/>
<dbReference type="KEGG" id="lhe:lhv_1616"/>
<dbReference type="eggNOG" id="COG0266">
    <property type="taxonomic scope" value="Bacteria"/>
</dbReference>
<dbReference type="HOGENOM" id="CLU_038423_1_2_9"/>
<dbReference type="Proteomes" id="UP000000790">
    <property type="component" value="Chromosome"/>
</dbReference>
<dbReference type="GO" id="GO:0034039">
    <property type="term" value="F:8-oxo-7,8-dihydroguanine DNA N-glycosylase activity"/>
    <property type="evidence" value="ECO:0007669"/>
    <property type="project" value="TreeGrafter"/>
</dbReference>
<dbReference type="GO" id="GO:0140078">
    <property type="term" value="F:class I DNA-(apurinic or apyrimidinic site) endonuclease activity"/>
    <property type="evidence" value="ECO:0007669"/>
    <property type="project" value="UniProtKB-EC"/>
</dbReference>
<dbReference type="GO" id="GO:0003684">
    <property type="term" value="F:damaged DNA binding"/>
    <property type="evidence" value="ECO:0007669"/>
    <property type="project" value="InterPro"/>
</dbReference>
<dbReference type="GO" id="GO:0008270">
    <property type="term" value="F:zinc ion binding"/>
    <property type="evidence" value="ECO:0007669"/>
    <property type="project" value="UniProtKB-UniRule"/>
</dbReference>
<dbReference type="GO" id="GO:0006284">
    <property type="term" value="P:base-excision repair"/>
    <property type="evidence" value="ECO:0007669"/>
    <property type="project" value="InterPro"/>
</dbReference>
<dbReference type="CDD" id="cd08966">
    <property type="entry name" value="EcFpg-like_N"/>
    <property type="match status" value="1"/>
</dbReference>
<dbReference type="FunFam" id="1.10.8.50:FF:000003">
    <property type="entry name" value="Formamidopyrimidine-DNA glycosylase"/>
    <property type="match status" value="1"/>
</dbReference>
<dbReference type="FunFam" id="3.20.190.10:FF:000001">
    <property type="entry name" value="Formamidopyrimidine-DNA glycosylase"/>
    <property type="match status" value="1"/>
</dbReference>
<dbReference type="Gene3D" id="1.10.8.50">
    <property type="match status" value="1"/>
</dbReference>
<dbReference type="Gene3D" id="3.20.190.10">
    <property type="entry name" value="MutM-like, N-terminal"/>
    <property type="match status" value="1"/>
</dbReference>
<dbReference type="HAMAP" id="MF_00103">
    <property type="entry name" value="Fapy_DNA_glycosyl"/>
    <property type="match status" value="1"/>
</dbReference>
<dbReference type="InterPro" id="IPR015886">
    <property type="entry name" value="DNA_glyclase/AP_lyase_DNA-bd"/>
</dbReference>
<dbReference type="InterPro" id="IPR020629">
    <property type="entry name" value="Formamido-pyr_DNA_Glyclase"/>
</dbReference>
<dbReference type="InterPro" id="IPR012319">
    <property type="entry name" value="FPG_cat"/>
</dbReference>
<dbReference type="InterPro" id="IPR035937">
    <property type="entry name" value="MutM-like_N-ter"/>
</dbReference>
<dbReference type="InterPro" id="IPR010979">
    <property type="entry name" value="Ribosomal_uS13-like_H2TH"/>
</dbReference>
<dbReference type="InterPro" id="IPR000214">
    <property type="entry name" value="Znf_DNA_glyclase/AP_lyase"/>
</dbReference>
<dbReference type="InterPro" id="IPR010663">
    <property type="entry name" value="Znf_FPG/IleRS"/>
</dbReference>
<dbReference type="NCBIfam" id="TIGR00577">
    <property type="entry name" value="fpg"/>
    <property type="match status" value="1"/>
</dbReference>
<dbReference type="NCBIfam" id="NF002211">
    <property type="entry name" value="PRK01103.1"/>
    <property type="match status" value="1"/>
</dbReference>
<dbReference type="PANTHER" id="PTHR22993">
    <property type="entry name" value="FORMAMIDOPYRIMIDINE-DNA GLYCOSYLASE"/>
    <property type="match status" value="1"/>
</dbReference>
<dbReference type="PANTHER" id="PTHR22993:SF9">
    <property type="entry name" value="FORMAMIDOPYRIMIDINE-DNA GLYCOSYLASE"/>
    <property type="match status" value="1"/>
</dbReference>
<dbReference type="Pfam" id="PF01149">
    <property type="entry name" value="Fapy_DNA_glyco"/>
    <property type="match status" value="1"/>
</dbReference>
<dbReference type="Pfam" id="PF06831">
    <property type="entry name" value="H2TH"/>
    <property type="match status" value="1"/>
</dbReference>
<dbReference type="Pfam" id="PF06827">
    <property type="entry name" value="zf-FPG_IleRS"/>
    <property type="match status" value="1"/>
</dbReference>
<dbReference type="SMART" id="SM00898">
    <property type="entry name" value="Fapy_DNA_glyco"/>
    <property type="match status" value="1"/>
</dbReference>
<dbReference type="SMART" id="SM01232">
    <property type="entry name" value="H2TH"/>
    <property type="match status" value="1"/>
</dbReference>
<dbReference type="SUPFAM" id="SSF57716">
    <property type="entry name" value="Glucocorticoid receptor-like (DNA-binding domain)"/>
    <property type="match status" value="1"/>
</dbReference>
<dbReference type="SUPFAM" id="SSF81624">
    <property type="entry name" value="N-terminal domain of MutM-like DNA repair proteins"/>
    <property type="match status" value="1"/>
</dbReference>
<dbReference type="SUPFAM" id="SSF46946">
    <property type="entry name" value="S13-like H2TH domain"/>
    <property type="match status" value="1"/>
</dbReference>
<dbReference type="PROSITE" id="PS51068">
    <property type="entry name" value="FPG_CAT"/>
    <property type="match status" value="1"/>
</dbReference>
<dbReference type="PROSITE" id="PS51066">
    <property type="entry name" value="ZF_FPG_2"/>
    <property type="match status" value="1"/>
</dbReference>
<protein>
    <recommendedName>
        <fullName evidence="2">Formamidopyrimidine-DNA glycosylase</fullName>
        <shortName evidence="2">Fapy-DNA glycosylase</shortName>
        <ecNumber evidence="2">3.2.2.23</ecNumber>
    </recommendedName>
    <alternativeName>
        <fullName evidence="2">DNA-(apurinic or apyrimidinic site) lyase MutM</fullName>
        <shortName evidence="2">AP lyase MutM</shortName>
        <ecNumber evidence="2">4.2.99.18</ecNumber>
    </alternativeName>
</protein>
<gene>
    <name evidence="2" type="primary">mutM</name>
    <name evidence="2" type="synonym">fpg</name>
    <name type="ordered locus">lhv_1616</name>
</gene>
<comment type="function">
    <text evidence="2">Involved in base excision repair of DNA damaged by oxidation or by mutagenic agents. Acts as a DNA glycosylase that recognizes and removes damaged bases. Has a preference for oxidized purines, such as 7,8-dihydro-8-oxoguanine (8-oxoG). Has AP (apurinic/apyrimidinic) lyase activity and introduces nicks in the DNA strand. Cleaves the DNA backbone by beta-delta elimination to generate a single-strand break at the site of the removed base with both 3'- and 5'-phosphates.</text>
</comment>
<comment type="catalytic activity">
    <reaction evidence="2">
        <text>Hydrolysis of DNA containing ring-opened 7-methylguanine residues, releasing 2,6-diamino-4-hydroxy-5-(N-methyl)formamidopyrimidine.</text>
        <dbReference type="EC" id="3.2.2.23"/>
    </reaction>
</comment>
<comment type="catalytic activity">
    <reaction evidence="2">
        <text>2'-deoxyribonucleotide-(2'-deoxyribose 5'-phosphate)-2'-deoxyribonucleotide-DNA = a 3'-end 2'-deoxyribonucleotide-(2,3-dehydro-2,3-deoxyribose 5'-phosphate)-DNA + a 5'-end 5'-phospho-2'-deoxyribonucleoside-DNA + H(+)</text>
        <dbReference type="Rhea" id="RHEA:66592"/>
        <dbReference type="Rhea" id="RHEA-COMP:13180"/>
        <dbReference type="Rhea" id="RHEA-COMP:16897"/>
        <dbReference type="Rhea" id="RHEA-COMP:17067"/>
        <dbReference type="ChEBI" id="CHEBI:15378"/>
        <dbReference type="ChEBI" id="CHEBI:136412"/>
        <dbReference type="ChEBI" id="CHEBI:157695"/>
        <dbReference type="ChEBI" id="CHEBI:167181"/>
        <dbReference type="EC" id="4.2.99.18"/>
    </reaction>
</comment>
<comment type="cofactor">
    <cofactor evidence="2">
        <name>Zn(2+)</name>
        <dbReference type="ChEBI" id="CHEBI:29105"/>
    </cofactor>
    <text evidence="2">Binds 1 zinc ion per subunit.</text>
</comment>
<comment type="subunit">
    <text evidence="2">Monomer.</text>
</comment>
<comment type="similarity">
    <text evidence="2">Belongs to the FPG family.</text>
</comment>
<feature type="initiator methionine" description="Removed" evidence="1">
    <location>
        <position position="1"/>
    </location>
</feature>
<feature type="chain" id="PRO_1000071309" description="Formamidopyrimidine-DNA glycosylase">
    <location>
        <begin position="2"/>
        <end position="276"/>
    </location>
</feature>
<feature type="zinc finger region" description="FPG-type" evidence="2">
    <location>
        <begin position="239"/>
        <end position="273"/>
    </location>
</feature>
<feature type="active site" description="Schiff-base intermediate with DNA" evidence="2">
    <location>
        <position position="2"/>
    </location>
</feature>
<feature type="active site" description="Proton donor" evidence="2">
    <location>
        <position position="3"/>
    </location>
</feature>
<feature type="active site" description="Proton donor; for beta-elimination activity" evidence="2">
    <location>
        <position position="58"/>
    </location>
</feature>
<feature type="active site" description="Proton donor; for delta-elimination activity" evidence="2">
    <location>
        <position position="263"/>
    </location>
</feature>
<feature type="binding site" evidence="2">
    <location>
        <position position="92"/>
    </location>
    <ligand>
        <name>DNA</name>
        <dbReference type="ChEBI" id="CHEBI:16991"/>
    </ligand>
</feature>
<feature type="binding site" evidence="2">
    <location>
        <position position="111"/>
    </location>
    <ligand>
        <name>DNA</name>
        <dbReference type="ChEBI" id="CHEBI:16991"/>
    </ligand>
</feature>
<feature type="binding site" evidence="2">
    <location>
        <position position="154"/>
    </location>
    <ligand>
        <name>DNA</name>
        <dbReference type="ChEBI" id="CHEBI:16991"/>
    </ligand>
</feature>
<name>FPG_LACH4</name>
<organism>
    <name type="scientific">Lactobacillus helveticus (strain DPC 4571)</name>
    <dbReference type="NCBI Taxonomy" id="405566"/>
    <lineage>
        <taxon>Bacteria</taxon>
        <taxon>Bacillati</taxon>
        <taxon>Bacillota</taxon>
        <taxon>Bacilli</taxon>
        <taxon>Lactobacillales</taxon>
        <taxon>Lactobacillaceae</taxon>
        <taxon>Lactobacillus</taxon>
    </lineage>
</organism>
<reference key="1">
    <citation type="journal article" date="2008" name="J. Bacteriol.">
        <title>Genome sequence of Lactobacillus helveticus: an organism distinguished by selective gene loss and IS element expansion.</title>
        <authorList>
            <person name="Callanan M."/>
            <person name="Kaleta P."/>
            <person name="O'Callaghan J."/>
            <person name="O'Sullivan O."/>
            <person name="Jordan K."/>
            <person name="McAuliffe O."/>
            <person name="Sangrador-Vegas A."/>
            <person name="Slattery L."/>
            <person name="Fitzgerald G.F."/>
            <person name="Beresford T."/>
            <person name="Ross R.P."/>
        </authorList>
    </citation>
    <scope>NUCLEOTIDE SEQUENCE [LARGE SCALE GENOMIC DNA]</scope>
    <source>
        <strain>DPC 4571</strain>
    </source>
</reference>